<reference key="1">
    <citation type="journal article" date="2005" name="J. Bacteriol.">
        <title>Genomic sequence of an otitis media isolate of nontypeable Haemophilus influenzae: comparative study with H. influenzae serotype d, strain KW20.</title>
        <authorList>
            <person name="Harrison A."/>
            <person name="Dyer D.W."/>
            <person name="Gillaspy A."/>
            <person name="Ray W.C."/>
            <person name="Mungur R."/>
            <person name="Carson M.B."/>
            <person name="Zhong H."/>
            <person name="Gipson J."/>
            <person name="Gipson M."/>
            <person name="Johnson L.S."/>
            <person name="Lewis L."/>
            <person name="Bakaletz L.O."/>
            <person name="Munson R.S. Jr."/>
        </authorList>
    </citation>
    <scope>NUCLEOTIDE SEQUENCE [LARGE SCALE GENOMIC DNA]</scope>
    <source>
        <strain>86-028NP</strain>
    </source>
</reference>
<accession>Q4QJL3</accession>
<name>RF3_HAEI8</name>
<evidence type="ECO:0000255" key="1">
    <source>
        <dbReference type="HAMAP-Rule" id="MF_00072"/>
    </source>
</evidence>
<sequence>MSYPLEEVNKRRTFAIISHPDAGKTTITEKVLLYGNAIQTAGSVKGKGSAAHAKSDWMEMEKQRGISITTSVMQFPYNNCLVNLLDTPGHEDFSEDTYRTLTAVDSCLMVIDSAKGVEERTIKLMEVTRLRDTPIITFMNKLDRDIRDPMELLDEVENVLKIRCAPITWPIGCGKLFKGVYHLAKDETYLYQSGQGSTIQAVRVVKGLNNPELDVAVGDDLAQQLRDELELVQGASNEFEQDAFIKGELTPVFFGTALGNFGVDHFLDGLTQWAPKPQSRQADTRTVESAEEKFSGFVFKIQANMDPKHRDRVAFMRVVSGKYEKGMKLKHVRIGKDVVISDALTFMAGDRAHAEEAYAGDIIGLHNHGTIQIGDTFTQGETLKFTGIPNFAPELFRRIRLKDPLKQKQLLKGLVQLSEEGAVQVFRPLLNNDLIVGAVGVLQFDVVVSRLKTEYNVEAIYENVNVATARWVECADGKKFEEFKRKNEQNLALDGGDNLTYIAPTMVNLNLAQERYPDVVFYKTREH</sequence>
<protein>
    <recommendedName>
        <fullName evidence="1">Peptide chain release factor 3</fullName>
        <shortName evidence="1">RF-3</shortName>
    </recommendedName>
</protein>
<comment type="function">
    <text evidence="1">Increases the formation of ribosomal termination complexes and stimulates activities of RF-1 and RF-2. It binds guanine nucleotides and has strong preference for UGA stop codons. It may interact directly with the ribosome. The stimulation of RF-1 and RF-2 is significantly reduced by GTP and GDP, but not by GMP.</text>
</comment>
<comment type="subcellular location">
    <subcellularLocation>
        <location evidence="1">Cytoplasm</location>
    </subcellularLocation>
</comment>
<comment type="similarity">
    <text evidence="1">Belongs to the TRAFAC class translation factor GTPase superfamily. Classic translation factor GTPase family. PrfC subfamily.</text>
</comment>
<dbReference type="EMBL" id="CP000057">
    <property type="protein sequence ID" value="AAX88784.1"/>
    <property type="molecule type" value="Genomic_DNA"/>
</dbReference>
<dbReference type="RefSeq" id="WP_005688062.1">
    <property type="nucleotide sequence ID" value="NC_007146.2"/>
</dbReference>
<dbReference type="SMR" id="Q4QJL3"/>
<dbReference type="GeneID" id="93220741"/>
<dbReference type="KEGG" id="hit:NTHI2044"/>
<dbReference type="HOGENOM" id="CLU_002794_2_1_6"/>
<dbReference type="Proteomes" id="UP000002525">
    <property type="component" value="Chromosome"/>
</dbReference>
<dbReference type="GO" id="GO:0005829">
    <property type="term" value="C:cytosol"/>
    <property type="evidence" value="ECO:0007669"/>
    <property type="project" value="TreeGrafter"/>
</dbReference>
<dbReference type="GO" id="GO:0005525">
    <property type="term" value="F:GTP binding"/>
    <property type="evidence" value="ECO:0007669"/>
    <property type="project" value="UniProtKB-UniRule"/>
</dbReference>
<dbReference type="GO" id="GO:0003924">
    <property type="term" value="F:GTPase activity"/>
    <property type="evidence" value="ECO:0007669"/>
    <property type="project" value="InterPro"/>
</dbReference>
<dbReference type="GO" id="GO:0097216">
    <property type="term" value="F:guanosine tetraphosphate binding"/>
    <property type="evidence" value="ECO:0007669"/>
    <property type="project" value="UniProtKB-ARBA"/>
</dbReference>
<dbReference type="GO" id="GO:0016150">
    <property type="term" value="F:translation release factor activity, codon nonspecific"/>
    <property type="evidence" value="ECO:0007669"/>
    <property type="project" value="TreeGrafter"/>
</dbReference>
<dbReference type="GO" id="GO:0016149">
    <property type="term" value="F:translation release factor activity, codon specific"/>
    <property type="evidence" value="ECO:0007669"/>
    <property type="project" value="UniProtKB-UniRule"/>
</dbReference>
<dbReference type="GO" id="GO:0006449">
    <property type="term" value="P:regulation of translational termination"/>
    <property type="evidence" value="ECO:0007669"/>
    <property type="project" value="UniProtKB-UniRule"/>
</dbReference>
<dbReference type="CDD" id="cd04169">
    <property type="entry name" value="RF3"/>
    <property type="match status" value="1"/>
</dbReference>
<dbReference type="CDD" id="cd03689">
    <property type="entry name" value="RF3_II"/>
    <property type="match status" value="1"/>
</dbReference>
<dbReference type="CDD" id="cd16259">
    <property type="entry name" value="RF3_III"/>
    <property type="match status" value="1"/>
</dbReference>
<dbReference type="FunFam" id="2.40.30.10:FF:000040">
    <property type="entry name" value="Peptide chain release factor 3"/>
    <property type="match status" value="1"/>
</dbReference>
<dbReference type="FunFam" id="3.30.70.3280:FF:000001">
    <property type="entry name" value="Peptide chain release factor 3"/>
    <property type="match status" value="1"/>
</dbReference>
<dbReference type="FunFam" id="3.40.50.300:FF:000542">
    <property type="entry name" value="Peptide chain release factor 3"/>
    <property type="match status" value="1"/>
</dbReference>
<dbReference type="Gene3D" id="3.40.50.300">
    <property type="entry name" value="P-loop containing nucleotide triphosphate hydrolases"/>
    <property type="match status" value="2"/>
</dbReference>
<dbReference type="Gene3D" id="3.30.70.3280">
    <property type="entry name" value="Peptide chain release factor 3, domain III"/>
    <property type="match status" value="1"/>
</dbReference>
<dbReference type="HAMAP" id="MF_00072">
    <property type="entry name" value="Rel_fac_3"/>
    <property type="match status" value="1"/>
</dbReference>
<dbReference type="InterPro" id="IPR053905">
    <property type="entry name" value="EF-G-like_DII"/>
</dbReference>
<dbReference type="InterPro" id="IPR035647">
    <property type="entry name" value="EFG_III/V"/>
</dbReference>
<dbReference type="InterPro" id="IPR031157">
    <property type="entry name" value="G_TR_CS"/>
</dbReference>
<dbReference type="InterPro" id="IPR027417">
    <property type="entry name" value="P-loop_NTPase"/>
</dbReference>
<dbReference type="InterPro" id="IPR004548">
    <property type="entry name" value="PrfC"/>
</dbReference>
<dbReference type="InterPro" id="IPR032090">
    <property type="entry name" value="RF3_C"/>
</dbReference>
<dbReference type="InterPro" id="IPR038467">
    <property type="entry name" value="RF3_dom_3_sf"/>
</dbReference>
<dbReference type="InterPro" id="IPR041732">
    <property type="entry name" value="RF3_GTP-bd"/>
</dbReference>
<dbReference type="InterPro" id="IPR005225">
    <property type="entry name" value="Small_GTP-bd"/>
</dbReference>
<dbReference type="InterPro" id="IPR000795">
    <property type="entry name" value="T_Tr_GTP-bd_dom"/>
</dbReference>
<dbReference type="InterPro" id="IPR009000">
    <property type="entry name" value="Transl_B-barrel_sf"/>
</dbReference>
<dbReference type="NCBIfam" id="TIGR00503">
    <property type="entry name" value="prfC"/>
    <property type="match status" value="1"/>
</dbReference>
<dbReference type="NCBIfam" id="NF001964">
    <property type="entry name" value="PRK00741.1"/>
    <property type="match status" value="1"/>
</dbReference>
<dbReference type="NCBIfam" id="TIGR00231">
    <property type="entry name" value="small_GTP"/>
    <property type="match status" value="1"/>
</dbReference>
<dbReference type="PANTHER" id="PTHR43556">
    <property type="entry name" value="PEPTIDE CHAIN RELEASE FACTOR RF3"/>
    <property type="match status" value="1"/>
</dbReference>
<dbReference type="PANTHER" id="PTHR43556:SF2">
    <property type="entry name" value="PEPTIDE CHAIN RELEASE FACTOR RF3"/>
    <property type="match status" value="1"/>
</dbReference>
<dbReference type="Pfam" id="PF22042">
    <property type="entry name" value="EF-G_D2"/>
    <property type="match status" value="1"/>
</dbReference>
<dbReference type="Pfam" id="PF00009">
    <property type="entry name" value="GTP_EFTU"/>
    <property type="match status" value="1"/>
</dbReference>
<dbReference type="Pfam" id="PF16658">
    <property type="entry name" value="RF3_C"/>
    <property type="match status" value="1"/>
</dbReference>
<dbReference type="PRINTS" id="PR00315">
    <property type="entry name" value="ELONGATNFCT"/>
</dbReference>
<dbReference type="SUPFAM" id="SSF54980">
    <property type="entry name" value="EF-G C-terminal domain-like"/>
    <property type="match status" value="1"/>
</dbReference>
<dbReference type="SUPFAM" id="SSF52540">
    <property type="entry name" value="P-loop containing nucleoside triphosphate hydrolases"/>
    <property type="match status" value="1"/>
</dbReference>
<dbReference type="SUPFAM" id="SSF50447">
    <property type="entry name" value="Translation proteins"/>
    <property type="match status" value="1"/>
</dbReference>
<dbReference type="PROSITE" id="PS00301">
    <property type="entry name" value="G_TR_1"/>
    <property type="match status" value="1"/>
</dbReference>
<dbReference type="PROSITE" id="PS51722">
    <property type="entry name" value="G_TR_2"/>
    <property type="match status" value="1"/>
</dbReference>
<feature type="chain" id="PRO_0000242181" description="Peptide chain release factor 3">
    <location>
        <begin position="1"/>
        <end position="527"/>
    </location>
</feature>
<feature type="domain" description="tr-type G">
    <location>
        <begin position="9"/>
        <end position="278"/>
    </location>
</feature>
<feature type="binding site" evidence="1">
    <location>
        <begin position="18"/>
        <end position="25"/>
    </location>
    <ligand>
        <name>GTP</name>
        <dbReference type="ChEBI" id="CHEBI:37565"/>
    </ligand>
</feature>
<feature type="binding site" evidence="1">
    <location>
        <begin position="86"/>
        <end position="90"/>
    </location>
    <ligand>
        <name>GTP</name>
        <dbReference type="ChEBI" id="CHEBI:37565"/>
    </ligand>
</feature>
<feature type="binding site" evidence="1">
    <location>
        <begin position="140"/>
        <end position="143"/>
    </location>
    <ligand>
        <name>GTP</name>
        <dbReference type="ChEBI" id="CHEBI:37565"/>
    </ligand>
</feature>
<organism>
    <name type="scientific">Haemophilus influenzae (strain 86-028NP)</name>
    <dbReference type="NCBI Taxonomy" id="281310"/>
    <lineage>
        <taxon>Bacteria</taxon>
        <taxon>Pseudomonadati</taxon>
        <taxon>Pseudomonadota</taxon>
        <taxon>Gammaproteobacteria</taxon>
        <taxon>Pasteurellales</taxon>
        <taxon>Pasteurellaceae</taxon>
        <taxon>Haemophilus</taxon>
    </lineage>
</organism>
<proteinExistence type="inferred from homology"/>
<keyword id="KW-0963">Cytoplasm</keyword>
<keyword id="KW-0342">GTP-binding</keyword>
<keyword id="KW-0547">Nucleotide-binding</keyword>
<keyword id="KW-0648">Protein biosynthesis</keyword>
<gene>
    <name evidence="1" type="primary">prfC</name>
    <name type="ordered locus">NTHI2044</name>
</gene>